<evidence type="ECO:0000255" key="1">
    <source>
        <dbReference type="HAMAP-Rule" id="MF_00204"/>
    </source>
</evidence>
<feature type="chain" id="PRO_0000138422" description="UvrABC system protein B">
    <location>
        <begin position="1"/>
        <end position="673"/>
    </location>
</feature>
<feature type="domain" description="Helicase ATP-binding" evidence="1">
    <location>
        <begin position="26"/>
        <end position="414"/>
    </location>
</feature>
<feature type="domain" description="Helicase C-terminal" evidence="1">
    <location>
        <begin position="431"/>
        <end position="597"/>
    </location>
</feature>
<feature type="domain" description="UVR" evidence="1">
    <location>
        <begin position="633"/>
        <end position="668"/>
    </location>
</feature>
<feature type="short sequence motif" description="Beta-hairpin">
    <location>
        <begin position="92"/>
        <end position="115"/>
    </location>
</feature>
<feature type="binding site" evidence="1">
    <location>
        <begin position="39"/>
        <end position="46"/>
    </location>
    <ligand>
        <name>ATP</name>
        <dbReference type="ChEBI" id="CHEBI:30616"/>
    </ligand>
</feature>
<comment type="function">
    <text evidence="1">The UvrABC repair system catalyzes the recognition and processing of DNA lesions. A damage recognition complex composed of 2 UvrA and 2 UvrB subunits scans DNA for abnormalities. Upon binding of the UvrA(2)B(2) complex to a putative damaged site, the DNA wraps around one UvrB monomer. DNA wrap is dependent on ATP binding by UvrB and probably causes local melting of the DNA helix, facilitating insertion of UvrB beta-hairpin between the DNA strands. Then UvrB probes one DNA strand for the presence of a lesion. If a lesion is found the UvrA subunits dissociate and the UvrB-DNA preincision complex is formed. This complex is subsequently bound by UvrC and the second UvrB is released. If no lesion is found, the DNA wraps around the other UvrB subunit that will check the other stand for damage.</text>
</comment>
<comment type="subunit">
    <text evidence="1">Forms a heterotetramer with UvrA during the search for lesions. Interacts with UvrC in an incision complex.</text>
</comment>
<comment type="subcellular location">
    <subcellularLocation>
        <location evidence="1">Cytoplasm</location>
    </subcellularLocation>
</comment>
<comment type="domain">
    <text evidence="1">The beta-hairpin motif is involved in DNA binding.</text>
</comment>
<comment type="similarity">
    <text evidence="1">Belongs to the UvrB family.</text>
</comment>
<accession>Q8Z889</accession>
<proteinExistence type="inferred from homology"/>
<name>UVRB_SALTI</name>
<reference key="1">
    <citation type="journal article" date="2001" name="Nature">
        <title>Complete genome sequence of a multiple drug resistant Salmonella enterica serovar Typhi CT18.</title>
        <authorList>
            <person name="Parkhill J."/>
            <person name="Dougan G."/>
            <person name="James K.D."/>
            <person name="Thomson N.R."/>
            <person name="Pickard D."/>
            <person name="Wain J."/>
            <person name="Churcher C.M."/>
            <person name="Mungall K.L."/>
            <person name="Bentley S.D."/>
            <person name="Holden M.T.G."/>
            <person name="Sebaihia M."/>
            <person name="Baker S."/>
            <person name="Basham D."/>
            <person name="Brooks K."/>
            <person name="Chillingworth T."/>
            <person name="Connerton P."/>
            <person name="Cronin A."/>
            <person name="Davis P."/>
            <person name="Davies R.M."/>
            <person name="Dowd L."/>
            <person name="White N."/>
            <person name="Farrar J."/>
            <person name="Feltwell T."/>
            <person name="Hamlin N."/>
            <person name="Haque A."/>
            <person name="Hien T.T."/>
            <person name="Holroyd S."/>
            <person name="Jagels K."/>
            <person name="Krogh A."/>
            <person name="Larsen T.S."/>
            <person name="Leather S."/>
            <person name="Moule S."/>
            <person name="O'Gaora P."/>
            <person name="Parry C."/>
            <person name="Quail M.A."/>
            <person name="Rutherford K.M."/>
            <person name="Simmonds M."/>
            <person name="Skelton J."/>
            <person name="Stevens K."/>
            <person name="Whitehead S."/>
            <person name="Barrell B.G."/>
        </authorList>
    </citation>
    <scope>NUCLEOTIDE SEQUENCE [LARGE SCALE GENOMIC DNA]</scope>
    <source>
        <strain>CT18</strain>
    </source>
</reference>
<reference key="2">
    <citation type="journal article" date="2003" name="J. Bacteriol.">
        <title>Comparative genomics of Salmonella enterica serovar Typhi strains Ty2 and CT18.</title>
        <authorList>
            <person name="Deng W."/>
            <person name="Liou S.-R."/>
            <person name="Plunkett G. III"/>
            <person name="Mayhew G.F."/>
            <person name="Rose D.J."/>
            <person name="Burland V."/>
            <person name="Kodoyianni V."/>
            <person name="Schwartz D.C."/>
            <person name="Blattner F.R."/>
        </authorList>
    </citation>
    <scope>NUCLEOTIDE SEQUENCE [LARGE SCALE GENOMIC DNA]</scope>
    <source>
        <strain>ATCC 700931 / Ty2</strain>
    </source>
</reference>
<sequence>MSKPFKLNSAFKPSGDQPDAIRRLEEGLEDGLAHQTLLGVTGSGKTFTIANVIADLQRPTMVLAPNKTLAAQLYGEMKEFFPENAVEYFVSYYDYYQPEAYVPSSDTFIEKDASVNEHIEQMRLSATKALLERRDVVVVASVSAIYGLGDPDLYLKMMLHLTVGMLIDQRAILRRLAELQYTRNDQAFQRGTFRVRGEVIDIFPAESDDIALRVELFDEEVERLSLFDPLTGQVESTVPRYTIYPKTHYVTPRERILQAMEEIKDELADRRKVLLANNKLLEEQRLSQRTQFDLEMMNELGYCSGIENYSRFLSGRGPGEPPPTLFDYLPADGLLVVDESHVTIPQIGGMYRGDRARKETLVEYGFRLPSALDNRPLKFEEFEALAPQTIYVSATPGNYELEKSGDEVVDQVVRPTGLLDPIIEVRPVATQVDDLLSEIRQRAAINERVLVTTLTKRMAEDLTEYLEEHGERVRYLHSDIDTVERMEIIRDLRLGEFDVLVGINLLREGLDMPEVSLVAILDADKEGFLRSERSLIQTIGRAARNVNGKAILYGDKITPSMAKAIGETERRREKQQKYNEEHGITPQGLNKKVVDILALGQNIAKTKAKGKGKGRSTAKAGIVELDMTPKALQQKIHELEEQMMQHAQNLEFEEAAQIRDQLHQLRELFIAAS</sequence>
<gene>
    <name evidence="1" type="primary">uvrB</name>
    <name type="ordered locus">STY0831</name>
    <name type="ordered locus">t2089</name>
</gene>
<keyword id="KW-0067">ATP-binding</keyword>
<keyword id="KW-0963">Cytoplasm</keyword>
<keyword id="KW-0227">DNA damage</keyword>
<keyword id="KW-0228">DNA excision</keyword>
<keyword id="KW-0234">DNA repair</keyword>
<keyword id="KW-0267">Excision nuclease</keyword>
<keyword id="KW-0547">Nucleotide-binding</keyword>
<keyword id="KW-0742">SOS response</keyword>
<organism>
    <name type="scientific">Salmonella typhi</name>
    <dbReference type="NCBI Taxonomy" id="90370"/>
    <lineage>
        <taxon>Bacteria</taxon>
        <taxon>Pseudomonadati</taxon>
        <taxon>Pseudomonadota</taxon>
        <taxon>Gammaproteobacteria</taxon>
        <taxon>Enterobacterales</taxon>
        <taxon>Enterobacteriaceae</taxon>
        <taxon>Salmonella</taxon>
    </lineage>
</organism>
<protein>
    <recommendedName>
        <fullName evidence="1">UvrABC system protein B</fullName>
        <shortName evidence="1">Protein UvrB</shortName>
    </recommendedName>
    <alternativeName>
        <fullName evidence="1">Excinuclease ABC subunit B</fullName>
    </alternativeName>
</protein>
<dbReference type="EMBL" id="AL513382">
    <property type="protein sequence ID" value="CAD05246.1"/>
    <property type="molecule type" value="Genomic_DNA"/>
</dbReference>
<dbReference type="EMBL" id="AE014613">
    <property type="protein sequence ID" value="AAO69706.1"/>
    <property type="molecule type" value="Genomic_DNA"/>
</dbReference>
<dbReference type="RefSeq" id="NP_455340.1">
    <property type="nucleotide sequence ID" value="NC_003198.1"/>
</dbReference>
<dbReference type="RefSeq" id="WP_000042501.1">
    <property type="nucleotide sequence ID" value="NZ_WSUR01000021.1"/>
</dbReference>
<dbReference type="SMR" id="Q8Z889"/>
<dbReference type="STRING" id="220341.gene:17584836"/>
<dbReference type="KEGG" id="stt:t2089"/>
<dbReference type="KEGG" id="sty:STY0831"/>
<dbReference type="PATRIC" id="fig|220341.7.peg.835"/>
<dbReference type="eggNOG" id="COG0556">
    <property type="taxonomic scope" value="Bacteria"/>
</dbReference>
<dbReference type="HOGENOM" id="CLU_009621_2_1_6"/>
<dbReference type="OMA" id="RYMHSEI"/>
<dbReference type="OrthoDB" id="9806651at2"/>
<dbReference type="Proteomes" id="UP000000541">
    <property type="component" value="Chromosome"/>
</dbReference>
<dbReference type="Proteomes" id="UP000002670">
    <property type="component" value="Chromosome"/>
</dbReference>
<dbReference type="GO" id="GO:0005737">
    <property type="term" value="C:cytoplasm"/>
    <property type="evidence" value="ECO:0007669"/>
    <property type="project" value="UniProtKB-SubCell"/>
</dbReference>
<dbReference type="GO" id="GO:0009380">
    <property type="term" value="C:excinuclease repair complex"/>
    <property type="evidence" value="ECO:0007669"/>
    <property type="project" value="InterPro"/>
</dbReference>
<dbReference type="GO" id="GO:0005524">
    <property type="term" value="F:ATP binding"/>
    <property type="evidence" value="ECO:0007669"/>
    <property type="project" value="UniProtKB-UniRule"/>
</dbReference>
<dbReference type="GO" id="GO:0016887">
    <property type="term" value="F:ATP hydrolysis activity"/>
    <property type="evidence" value="ECO:0007669"/>
    <property type="project" value="InterPro"/>
</dbReference>
<dbReference type="GO" id="GO:0003677">
    <property type="term" value="F:DNA binding"/>
    <property type="evidence" value="ECO:0007669"/>
    <property type="project" value="UniProtKB-UniRule"/>
</dbReference>
<dbReference type="GO" id="GO:0009381">
    <property type="term" value="F:excinuclease ABC activity"/>
    <property type="evidence" value="ECO:0007669"/>
    <property type="project" value="UniProtKB-UniRule"/>
</dbReference>
<dbReference type="GO" id="GO:0006289">
    <property type="term" value="P:nucleotide-excision repair"/>
    <property type="evidence" value="ECO:0007669"/>
    <property type="project" value="UniProtKB-UniRule"/>
</dbReference>
<dbReference type="GO" id="GO:0009432">
    <property type="term" value="P:SOS response"/>
    <property type="evidence" value="ECO:0007669"/>
    <property type="project" value="UniProtKB-UniRule"/>
</dbReference>
<dbReference type="CDD" id="cd17916">
    <property type="entry name" value="DEXHc_UvrB"/>
    <property type="match status" value="1"/>
</dbReference>
<dbReference type="CDD" id="cd18790">
    <property type="entry name" value="SF2_C_UvrB"/>
    <property type="match status" value="1"/>
</dbReference>
<dbReference type="FunFam" id="3.40.50.300:FF:000257">
    <property type="entry name" value="UvrABC system protein B"/>
    <property type="match status" value="1"/>
</dbReference>
<dbReference type="FunFam" id="3.40.50.300:FF:000401">
    <property type="entry name" value="UvrABC system protein B"/>
    <property type="match status" value="1"/>
</dbReference>
<dbReference type="FunFam" id="3.40.50.300:FF:000477">
    <property type="entry name" value="UvrABC system protein B"/>
    <property type="match status" value="1"/>
</dbReference>
<dbReference type="Gene3D" id="6.10.140.240">
    <property type="match status" value="1"/>
</dbReference>
<dbReference type="Gene3D" id="3.40.50.300">
    <property type="entry name" value="P-loop containing nucleotide triphosphate hydrolases"/>
    <property type="match status" value="3"/>
</dbReference>
<dbReference type="Gene3D" id="4.10.860.10">
    <property type="entry name" value="UVR domain"/>
    <property type="match status" value="1"/>
</dbReference>
<dbReference type="HAMAP" id="MF_00204">
    <property type="entry name" value="UvrB"/>
    <property type="match status" value="1"/>
</dbReference>
<dbReference type="InterPro" id="IPR006935">
    <property type="entry name" value="Helicase/UvrB_N"/>
</dbReference>
<dbReference type="InterPro" id="IPR014001">
    <property type="entry name" value="Helicase_ATP-bd"/>
</dbReference>
<dbReference type="InterPro" id="IPR001650">
    <property type="entry name" value="Helicase_C-like"/>
</dbReference>
<dbReference type="InterPro" id="IPR027417">
    <property type="entry name" value="P-loop_NTPase"/>
</dbReference>
<dbReference type="InterPro" id="IPR001943">
    <property type="entry name" value="UVR_dom"/>
</dbReference>
<dbReference type="InterPro" id="IPR036876">
    <property type="entry name" value="UVR_dom_sf"/>
</dbReference>
<dbReference type="InterPro" id="IPR004807">
    <property type="entry name" value="UvrB"/>
</dbReference>
<dbReference type="InterPro" id="IPR041471">
    <property type="entry name" value="UvrB_inter"/>
</dbReference>
<dbReference type="InterPro" id="IPR024759">
    <property type="entry name" value="UvrB_YAD/RRR_dom"/>
</dbReference>
<dbReference type="NCBIfam" id="NF003673">
    <property type="entry name" value="PRK05298.1"/>
    <property type="match status" value="1"/>
</dbReference>
<dbReference type="NCBIfam" id="TIGR00631">
    <property type="entry name" value="uvrb"/>
    <property type="match status" value="1"/>
</dbReference>
<dbReference type="PANTHER" id="PTHR24029">
    <property type="entry name" value="UVRABC SYSTEM PROTEIN B"/>
    <property type="match status" value="1"/>
</dbReference>
<dbReference type="PANTHER" id="PTHR24029:SF0">
    <property type="entry name" value="UVRABC SYSTEM PROTEIN B"/>
    <property type="match status" value="1"/>
</dbReference>
<dbReference type="Pfam" id="PF00271">
    <property type="entry name" value="Helicase_C"/>
    <property type="match status" value="1"/>
</dbReference>
<dbReference type="Pfam" id="PF04851">
    <property type="entry name" value="ResIII"/>
    <property type="match status" value="1"/>
</dbReference>
<dbReference type="Pfam" id="PF02151">
    <property type="entry name" value="UVR"/>
    <property type="match status" value="1"/>
</dbReference>
<dbReference type="Pfam" id="PF12344">
    <property type="entry name" value="UvrB"/>
    <property type="match status" value="1"/>
</dbReference>
<dbReference type="Pfam" id="PF17757">
    <property type="entry name" value="UvrB_inter"/>
    <property type="match status" value="1"/>
</dbReference>
<dbReference type="SMART" id="SM00487">
    <property type="entry name" value="DEXDc"/>
    <property type="match status" value="1"/>
</dbReference>
<dbReference type="SMART" id="SM00490">
    <property type="entry name" value="HELICc"/>
    <property type="match status" value="1"/>
</dbReference>
<dbReference type="SUPFAM" id="SSF46600">
    <property type="entry name" value="C-terminal UvrC-binding domain of UvrB"/>
    <property type="match status" value="1"/>
</dbReference>
<dbReference type="SUPFAM" id="SSF52540">
    <property type="entry name" value="P-loop containing nucleoside triphosphate hydrolases"/>
    <property type="match status" value="2"/>
</dbReference>
<dbReference type="PROSITE" id="PS51192">
    <property type="entry name" value="HELICASE_ATP_BIND_1"/>
    <property type="match status" value="1"/>
</dbReference>
<dbReference type="PROSITE" id="PS51194">
    <property type="entry name" value="HELICASE_CTER"/>
    <property type="match status" value="1"/>
</dbReference>
<dbReference type="PROSITE" id="PS50151">
    <property type="entry name" value="UVR"/>
    <property type="match status" value="1"/>
</dbReference>